<dbReference type="EMBL" id="AF481142">
    <property type="protein sequence ID" value="AAM89221.1"/>
    <property type="molecule type" value="mRNA"/>
</dbReference>
<dbReference type="EMBL" id="AB107016">
    <property type="protein sequence ID" value="BAD51818.1"/>
    <property type="molecule type" value="mRNA"/>
</dbReference>
<dbReference type="EMBL" id="AK131149">
    <property type="protein sequence ID" value="BAD21399.1"/>
    <property type="status" value="ALT_SEQ"/>
    <property type="molecule type" value="Transcribed_RNA"/>
</dbReference>
<dbReference type="EMBL" id="AK030815">
    <property type="protein sequence ID" value="BAC27145.1"/>
    <property type="molecule type" value="mRNA"/>
</dbReference>
<dbReference type="EMBL" id="AK053076">
    <property type="protein sequence ID" value="BAC35257.1"/>
    <property type="molecule type" value="mRNA"/>
</dbReference>
<dbReference type="EMBL" id="AK155451">
    <property type="protein sequence ID" value="BAE33270.1"/>
    <property type="molecule type" value="mRNA"/>
</dbReference>
<dbReference type="EMBL" id="BC022645">
    <property type="protein sequence ID" value="AAH22645.1"/>
    <property type="molecule type" value="mRNA"/>
</dbReference>
<dbReference type="EMBL" id="BC117928">
    <property type="protein sequence ID" value="AAI17929.1"/>
    <property type="molecule type" value="mRNA"/>
</dbReference>
<dbReference type="EMBL" id="BC117929">
    <property type="protein sequence ID" value="AAI17930.1"/>
    <property type="molecule type" value="mRNA"/>
</dbReference>
<dbReference type="CCDS" id="CCDS23579.1">
    <molecule id="Q60I26-1"/>
</dbReference>
<dbReference type="RefSeq" id="NP_001139531.1">
    <property type="nucleotide sequence ID" value="NM_001146059.1"/>
</dbReference>
<dbReference type="RefSeq" id="NP_001139532.1">
    <property type="nucleotide sequence ID" value="NM_001146060.1"/>
</dbReference>
<dbReference type="RefSeq" id="NP_666340.3">
    <property type="nucleotide sequence ID" value="NM_146228.4"/>
</dbReference>
<dbReference type="RefSeq" id="XP_006512166.1">
    <property type="nucleotide sequence ID" value="XM_006512103.2"/>
</dbReference>
<dbReference type="RefSeq" id="XP_017168843.1">
    <property type="nucleotide sequence ID" value="XM_017313354.1"/>
</dbReference>
<dbReference type="RefSeq" id="XP_017168844.1">
    <property type="nucleotide sequence ID" value="XM_017313355.1"/>
</dbReference>
<dbReference type="RefSeq" id="XP_017168845.1">
    <property type="nucleotide sequence ID" value="XM_017313356.1"/>
</dbReference>
<dbReference type="RefSeq" id="XP_017168846.1">
    <property type="nucleotide sequence ID" value="XM_017313357.1"/>
</dbReference>
<dbReference type="RefSeq" id="XP_017168847.1">
    <property type="nucleotide sequence ID" value="XM_017313358.1"/>
</dbReference>
<dbReference type="SMR" id="Q60I26"/>
<dbReference type="FunCoup" id="Q60I26">
    <property type="interactions" value="152"/>
</dbReference>
<dbReference type="STRING" id="10090.ENSMUSP00000115718"/>
<dbReference type="iPTMnet" id="Q60I26"/>
<dbReference type="PhosphoSitePlus" id="Q60I26"/>
<dbReference type="jPOST" id="Q60I26"/>
<dbReference type="PaxDb" id="10090-ENSMUSP00000115718"/>
<dbReference type="PeptideAtlas" id="Q60I26"/>
<dbReference type="ProteomicsDB" id="296162">
    <molecule id="Q60I26-1"/>
</dbReference>
<dbReference type="ProteomicsDB" id="296163">
    <molecule id="Q60I26-2"/>
</dbReference>
<dbReference type="ProteomicsDB" id="296164">
    <molecule id="Q60I26-3"/>
</dbReference>
<dbReference type="DNASU" id="235633"/>
<dbReference type="GeneID" id="235633"/>
<dbReference type="KEGG" id="mmu:235633"/>
<dbReference type="UCSC" id="uc009rvc.2">
    <molecule id="Q60I26-1"/>
    <property type="organism name" value="mouse"/>
</dbReference>
<dbReference type="AGR" id="MGI:2447532"/>
<dbReference type="CTD" id="259173"/>
<dbReference type="MGI" id="MGI:2447532">
    <property type="gene designation" value="Als2cl"/>
</dbReference>
<dbReference type="eggNOG" id="KOG0231">
    <property type="taxonomic scope" value="Eukaryota"/>
</dbReference>
<dbReference type="InParanoid" id="Q60I26"/>
<dbReference type="OrthoDB" id="48314at2759"/>
<dbReference type="PhylomeDB" id="Q60I26"/>
<dbReference type="TreeFam" id="TF331793"/>
<dbReference type="Reactome" id="R-MMU-8876198">
    <property type="pathway name" value="RAB GEFs exchange GTP for GDP on RABs"/>
</dbReference>
<dbReference type="BioGRID-ORCS" id="235633">
    <property type="hits" value="4 hits in 77 CRISPR screens"/>
</dbReference>
<dbReference type="ChiTaRS" id="Als2cl">
    <property type="organism name" value="mouse"/>
</dbReference>
<dbReference type="PRO" id="PR:Q60I26"/>
<dbReference type="Proteomes" id="UP000000589">
    <property type="component" value="Unplaced"/>
</dbReference>
<dbReference type="RNAct" id="Q60I26">
    <property type="molecule type" value="protein"/>
</dbReference>
<dbReference type="GO" id="GO:0031410">
    <property type="term" value="C:cytoplasmic vesicle"/>
    <property type="evidence" value="ECO:0000314"/>
    <property type="project" value="MGI"/>
</dbReference>
<dbReference type="GO" id="GO:0005096">
    <property type="term" value="F:GTPase activator activity"/>
    <property type="evidence" value="ECO:0007669"/>
    <property type="project" value="UniProtKB-KW"/>
</dbReference>
<dbReference type="GO" id="GO:0042802">
    <property type="term" value="F:identical protein binding"/>
    <property type="evidence" value="ECO:0000266"/>
    <property type="project" value="MGI"/>
</dbReference>
<dbReference type="GO" id="GO:0031267">
    <property type="term" value="F:small GTPase binding"/>
    <property type="evidence" value="ECO:0000353"/>
    <property type="project" value="MGI"/>
</dbReference>
<dbReference type="GO" id="GO:0007032">
    <property type="term" value="P:endosome organization"/>
    <property type="evidence" value="ECO:0000266"/>
    <property type="project" value="MGI"/>
</dbReference>
<dbReference type="GO" id="GO:0008104">
    <property type="term" value="P:protein localization"/>
    <property type="evidence" value="ECO:0000314"/>
    <property type="project" value="MGI"/>
</dbReference>
<dbReference type="FunFam" id="1.20.1050.80:FF:000006">
    <property type="entry name" value="ALS2 C-terminal-like protein"/>
    <property type="match status" value="1"/>
</dbReference>
<dbReference type="Gene3D" id="1.20.900.10">
    <property type="entry name" value="Dbl homology (DH) domain"/>
    <property type="match status" value="1"/>
</dbReference>
<dbReference type="Gene3D" id="2.20.110.10">
    <property type="entry name" value="Histone H3 K4-specific methyltransferase SET7/9 N-terminal domain"/>
    <property type="match status" value="3"/>
</dbReference>
<dbReference type="Gene3D" id="1.20.1050.80">
    <property type="entry name" value="VPS9 domain"/>
    <property type="match status" value="1"/>
</dbReference>
<dbReference type="InterPro" id="IPR051984">
    <property type="entry name" value="Alsin_GEFs/MotNeuronReg"/>
</dbReference>
<dbReference type="InterPro" id="IPR035899">
    <property type="entry name" value="DBL_dom_sf"/>
</dbReference>
<dbReference type="InterPro" id="IPR003409">
    <property type="entry name" value="MORN"/>
</dbReference>
<dbReference type="InterPro" id="IPR003123">
    <property type="entry name" value="VPS9"/>
</dbReference>
<dbReference type="InterPro" id="IPR037191">
    <property type="entry name" value="VPS9_dom_sf"/>
</dbReference>
<dbReference type="PANTHER" id="PTHR46089:SF1">
    <property type="entry name" value="ALS2 C-TERMINAL-LIKE PROTEIN"/>
    <property type="match status" value="1"/>
</dbReference>
<dbReference type="PANTHER" id="PTHR46089">
    <property type="entry name" value="ALSIN HOMOLOG"/>
    <property type="match status" value="1"/>
</dbReference>
<dbReference type="Pfam" id="PF02493">
    <property type="entry name" value="MORN"/>
    <property type="match status" value="6"/>
</dbReference>
<dbReference type="Pfam" id="PF25383">
    <property type="entry name" value="PH_alsin"/>
    <property type="match status" value="1"/>
</dbReference>
<dbReference type="Pfam" id="PF02204">
    <property type="entry name" value="VPS9"/>
    <property type="match status" value="1"/>
</dbReference>
<dbReference type="SMART" id="SM00698">
    <property type="entry name" value="MORN"/>
    <property type="match status" value="7"/>
</dbReference>
<dbReference type="SUPFAM" id="SSF48065">
    <property type="entry name" value="DBL homology domain (DH-domain)"/>
    <property type="match status" value="1"/>
</dbReference>
<dbReference type="SUPFAM" id="SSF82185">
    <property type="entry name" value="Histone H3 K4-specific methyltransferase SET7/9 N-terminal domain"/>
    <property type="match status" value="2"/>
</dbReference>
<dbReference type="SUPFAM" id="SSF109993">
    <property type="entry name" value="VPS9 domain"/>
    <property type="match status" value="1"/>
</dbReference>
<dbReference type="PROSITE" id="PS51205">
    <property type="entry name" value="VPS9"/>
    <property type="match status" value="1"/>
</dbReference>
<accession>Q60I26</accession>
<accession>Q6KAQ8</accession>
<accession>Q8C0K7</accession>
<accession>Q8K468</accession>
<accession>Q8R222</accession>
<keyword id="KW-0025">Alternative splicing</keyword>
<keyword id="KW-0963">Cytoplasm</keyword>
<keyword id="KW-0343">GTPase activation</keyword>
<keyword id="KW-1185">Reference proteome</keyword>
<keyword id="KW-0677">Repeat</keyword>
<sequence length="952" mass="108146">MSSSEEADLLRLEEVFSTTLARTISLILQPLLLADPEPSDPCGKECLRLLQQLHESAQRLWYVTEQSLLSLRQRLYHPPSKGLEAVLLLSNADHVLQAHMEYIKSYTDCVVAQAFQKVSKKRSEFWRSQRKALRQLLSSGSSEGSVGTTMCQALRQPLSQHVQKYLLLLLSLRDTLDESHPAQELVMHAITLFGNLQSFMGQALDQAVATQALWHSLSSRLRDVLCSPAHRLLQDSQDIPVVVTPLRAERVLLFDDSLVLLQGHNTHTFDLKLVWVKPGQDKCVLHILTPEEEISFCTRDPQGQVVWQWKVTQAVCQALCGKKDFPVLGSGRETSVPPECRCVAYTFCREGRLCQATYDGEWCRAKPHGKGTLKWPDGRNHVGTFYQGLEHGFGICLVPQASEDKFDCYKCHWREGRMCEYGICEYGTDEVYKGYFQAGLRHGFGILESAPQAPQPFRYTGHWERGQRSGYGIEEDRDRGERYIGMWQADQRHGPGVVVTQAGVCYQGTFQGDKMAGPGILLCEDDSLYEGTFTRDLTLLGKGKVTFPNGFTLDGSFSSGTDKGLYTQGVLDTAALPPDPSSTRKRQLGLGTFPVESRWQGVYSPFRDFLRLGCPGEQQEALLGFHTQSSRELRKSQECLCCERSHPEDCVGSMEDTLKELLQHRKPKALQQYLRKALSNSRHPLGQLLRTLMLTFQATYSGIGANKHLQEMAQEEVKQHARELWAAYRGLLKVALQHQGQTLEEENMETRDLQVHGLLLPLILPSFYSELFTLYLLLHEREDGLYSRGITNLSLFPDTKLLEFLDVQKHLWPLKDLKLTSNQRYSLVRDKCFLTATECLQKIITTVHPREKLEVLEKTYGEIEATVSRVLGCKYKLPMDDLLPLLIYVVSRARIQHLGAEIHLIRDMMDPVHTGGLHDFLLTALESCYEHIQKEDMRPHHLPGHWDARDLW</sequence>
<protein>
    <recommendedName>
        <fullName>ALS2 C-terminal-like protein</fullName>
    </recommendedName>
</protein>
<feature type="chain" id="PRO_0000313850" description="ALS2 C-terminal-like protein">
    <location>
        <begin position="1"/>
        <end position="952"/>
    </location>
</feature>
<feature type="repeat" description="MORN 1">
    <location>
        <begin position="358"/>
        <end position="380"/>
    </location>
</feature>
<feature type="repeat" description="MORN 2">
    <location>
        <begin position="381"/>
        <end position="403"/>
    </location>
</feature>
<feature type="repeat" description="MORN 3">
    <location>
        <begin position="409"/>
        <end position="431"/>
    </location>
</feature>
<feature type="repeat" description="MORN 4">
    <location>
        <begin position="432"/>
        <end position="454"/>
    </location>
</feature>
<feature type="repeat" description="MORN 5">
    <location>
        <begin position="459"/>
        <end position="481"/>
    </location>
</feature>
<feature type="repeat" description="MORN 6">
    <location>
        <begin position="483"/>
        <end position="505"/>
    </location>
</feature>
<feature type="repeat" description="MORN 7">
    <location>
        <begin position="506"/>
        <end position="528"/>
    </location>
</feature>
<feature type="repeat" description="MORN 8">
    <location>
        <begin position="529"/>
        <end position="552"/>
    </location>
</feature>
<feature type="domain" description="VPS9" evidence="2">
    <location>
        <begin position="795"/>
        <end position="941"/>
    </location>
</feature>
<feature type="splice variant" id="VSP_030172" description="In isoform 3." evidence="7">
    <location>
        <begin position="1"/>
        <end position="692"/>
    </location>
</feature>
<feature type="splice variant" id="VSP_030173" description="In isoform 2." evidence="6">
    <location>
        <begin position="645"/>
        <end position="747"/>
    </location>
</feature>
<feature type="sequence conflict" description="In Ref. 1; AAM89221 and 4; BAC35257." evidence="8" ref="1 4">
    <original>S</original>
    <variation>N</variation>
    <location>
        <position position="141"/>
    </location>
</feature>
<feature type="sequence conflict" description="In Ref. 1; AAM89221 and 4; BAC35257." evidence="8" ref="1 4">
    <original>C</original>
    <variation>R</variation>
    <location>
        <position position="348"/>
    </location>
</feature>
<feature type="sequence conflict" description="In Ref. 1; AAM89221 and 4; BAC35257/BAC27145." evidence="8" ref="1 4">
    <original>H</original>
    <variation>R</variation>
    <location>
        <position position="738"/>
    </location>
</feature>
<feature type="sequence conflict" description="In Ref. 1; AAM89221 and 4; BAC35257/BAC27145." evidence="8" ref="1 4">
    <original>P</original>
    <variation>L</variation>
    <location>
        <position position="939"/>
    </location>
</feature>
<feature type="sequence conflict" description="In Ref. 1; AAM89221, 4; BAC35257/BAC27145 and 5; AAH22645." evidence="8" ref="1 4 5">
    <original>D</original>
    <variation>E</variation>
    <location>
        <position position="950"/>
    </location>
</feature>
<organism>
    <name type="scientific">Mus musculus</name>
    <name type="common">Mouse</name>
    <dbReference type="NCBI Taxonomy" id="10090"/>
    <lineage>
        <taxon>Eukaryota</taxon>
        <taxon>Metazoa</taxon>
        <taxon>Chordata</taxon>
        <taxon>Craniata</taxon>
        <taxon>Vertebrata</taxon>
        <taxon>Euteleostomi</taxon>
        <taxon>Mammalia</taxon>
        <taxon>Eutheria</taxon>
        <taxon>Euarchontoglires</taxon>
        <taxon>Glires</taxon>
        <taxon>Rodentia</taxon>
        <taxon>Myomorpha</taxon>
        <taxon>Muroidea</taxon>
        <taxon>Muridae</taxon>
        <taxon>Murinae</taxon>
        <taxon>Mus</taxon>
        <taxon>Mus</taxon>
    </lineage>
</organism>
<name>AL2CL_MOUSE</name>
<comment type="function">
    <text evidence="1 4">Acts as a guanine nucleotide exchange factor (GEF) for Rab5 GTPase. Regulates the ALS2-mediated endosome dynamics (By similarity).</text>
</comment>
<comment type="subunit">
    <text evidence="3 5">Homodimer. Forms a heteromeric complex with ALS2. Interacts with ALS2 and RAB5A.</text>
</comment>
<comment type="subcellular location">
    <subcellularLocation>
        <location evidence="3 5">Cytoplasm</location>
    </subcellularLocation>
    <text evidence="1">Distributed onto the vesicular compartments in the cytoplasm with strong punctated staining. Colocalizes with RAB5A onto the vesicular/membranous compartments in the cytoplasm, particularly to the leading edges of the cells (By similarity).</text>
</comment>
<comment type="alternative products">
    <event type="alternative splicing"/>
    <isoform>
        <id>Q60I26-1</id>
        <name>1</name>
        <sequence type="displayed"/>
    </isoform>
    <isoform>
        <id>Q60I26-2</id>
        <name>2</name>
        <sequence type="described" ref="VSP_030173"/>
    </isoform>
    <isoform>
        <id>Q60I26-3</id>
        <name>3</name>
        <sequence type="described" ref="VSP_030172"/>
    </isoform>
</comment>
<comment type="tissue specificity">
    <text evidence="3">Expressed in heart, lung, liver and kidney.</text>
</comment>
<comment type="sequence caution" evidence="8">
    <conflict type="erroneous initiation">
        <sequence resource="EMBL-CDS" id="BAD21399"/>
    </conflict>
    <text>Extended N-terminus.</text>
</comment>
<comment type="sequence caution" evidence="8">
    <conflict type="miscellaneous discrepancy">
        <sequence resource="EMBL-CDS" id="BAD21399"/>
    </conflict>
    <text>Intron retention.</text>
</comment>
<evidence type="ECO:0000250" key="1"/>
<evidence type="ECO:0000255" key="2">
    <source>
        <dbReference type="PROSITE-ProRule" id="PRU00550"/>
    </source>
</evidence>
<evidence type="ECO:0000269" key="3">
    <source>
    </source>
</evidence>
<evidence type="ECO:0000269" key="4">
    <source>
    </source>
</evidence>
<evidence type="ECO:0000269" key="5">
    <source>
    </source>
</evidence>
<evidence type="ECO:0000303" key="6">
    <source>
    </source>
</evidence>
<evidence type="ECO:0000303" key="7">
    <source>
    </source>
</evidence>
<evidence type="ECO:0000305" key="8"/>
<proteinExistence type="evidence at protein level"/>
<gene>
    <name type="primary">Als2cl</name>
</gene>
<reference key="1">
    <citation type="journal article" date="2002" name="Hum. Mol. Genet.">
        <title>Mutation of the novel gene Tmie results in sensory cell defects in the inner ear of spinner, a mouse model of human hearing loss DFNB6.</title>
        <authorList>
            <person name="Mitchem K.L."/>
            <person name="Hibbard E."/>
            <person name="Beyer L.A."/>
            <person name="Bosom K."/>
            <person name="Dootz G.A."/>
            <person name="Dolan D.F."/>
            <person name="Johnson K.R."/>
            <person name="Raphael Y."/>
            <person name="Kohrman D.C."/>
        </authorList>
    </citation>
    <scope>NUCLEOTIDE SEQUENCE [MRNA] (ISOFORM 1)</scope>
    <source>
        <strain>C57BL/6J</strain>
    </source>
</reference>
<reference key="2">
    <citation type="journal article" date="2004" name="FEBS Lett.">
        <title>ALS2CL, the novel protein highly homologous to the carboxy-terminal half of ALS2, binds to Rab5 and modulates endosome dynamics.</title>
        <authorList>
            <person name="Hadano S."/>
            <person name="Otomo A."/>
            <person name="Suzuki-Utsunomiya K."/>
            <person name="Kunita R."/>
            <person name="Yanagisawa Y."/>
            <person name="Showguchi-Miyata J."/>
            <person name="Mizumura H."/>
            <person name="Ikeda J.-E."/>
        </authorList>
    </citation>
    <scope>NUCLEOTIDE SEQUENCE [MRNA] (ISOFORM 1)</scope>
    <scope>INTERACTION WITH RAB5A</scope>
    <scope>SUBCELLULAR LOCATION</scope>
    <scope>TISSUE SPECIFICITY</scope>
    <source>
        <strain>BALB/cJ</strain>
        <tissue>Brain</tissue>
    </source>
</reference>
<reference key="3">
    <citation type="journal article" date="2004" name="DNA Res.">
        <title>Prediction of the coding sequences of mouse homologues of FLJ genes: the complete nucleotide sequences of 110 mouse FLJ-homologous cDNAs identified by screening of terminal sequences of cDNA clones randomly sampled from size-fractionated libraries.</title>
        <authorList>
            <person name="Okazaki N."/>
            <person name="Kikuno R."/>
            <person name="Ohara R."/>
            <person name="Inamoto S."/>
            <person name="Koseki H."/>
            <person name="Hiraoka S."/>
            <person name="Saga Y."/>
            <person name="Kitamura H."/>
            <person name="Nakagawa T."/>
            <person name="Nagase T."/>
            <person name="Ohara O."/>
            <person name="Koga H."/>
        </authorList>
    </citation>
    <scope>NUCLEOTIDE SEQUENCE [LARGE SCALE MRNA] (ISOFORM 2)</scope>
    <source>
        <tissue>Brain</tissue>
    </source>
</reference>
<reference key="4">
    <citation type="journal article" date="2005" name="Science">
        <title>The transcriptional landscape of the mammalian genome.</title>
        <authorList>
            <person name="Carninci P."/>
            <person name="Kasukawa T."/>
            <person name="Katayama S."/>
            <person name="Gough J."/>
            <person name="Frith M.C."/>
            <person name="Maeda N."/>
            <person name="Oyama R."/>
            <person name="Ravasi T."/>
            <person name="Lenhard B."/>
            <person name="Wells C."/>
            <person name="Kodzius R."/>
            <person name="Shimokawa K."/>
            <person name="Bajic V.B."/>
            <person name="Brenner S.E."/>
            <person name="Batalov S."/>
            <person name="Forrest A.R."/>
            <person name="Zavolan M."/>
            <person name="Davis M.J."/>
            <person name="Wilming L.G."/>
            <person name="Aidinis V."/>
            <person name="Allen J.E."/>
            <person name="Ambesi-Impiombato A."/>
            <person name="Apweiler R."/>
            <person name="Aturaliya R.N."/>
            <person name="Bailey T.L."/>
            <person name="Bansal M."/>
            <person name="Baxter L."/>
            <person name="Beisel K.W."/>
            <person name="Bersano T."/>
            <person name="Bono H."/>
            <person name="Chalk A.M."/>
            <person name="Chiu K.P."/>
            <person name="Choudhary V."/>
            <person name="Christoffels A."/>
            <person name="Clutterbuck D.R."/>
            <person name="Crowe M.L."/>
            <person name="Dalla E."/>
            <person name="Dalrymple B.P."/>
            <person name="de Bono B."/>
            <person name="Della Gatta G."/>
            <person name="di Bernardo D."/>
            <person name="Down T."/>
            <person name="Engstrom P."/>
            <person name="Fagiolini M."/>
            <person name="Faulkner G."/>
            <person name="Fletcher C.F."/>
            <person name="Fukushima T."/>
            <person name="Furuno M."/>
            <person name="Futaki S."/>
            <person name="Gariboldi M."/>
            <person name="Georgii-Hemming P."/>
            <person name="Gingeras T.R."/>
            <person name="Gojobori T."/>
            <person name="Green R.E."/>
            <person name="Gustincich S."/>
            <person name="Harbers M."/>
            <person name="Hayashi Y."/>
            <person name="Hensch T.K."/>
            <person name="Hirokawa N."/>
            <person name="Hill D."/>
            <person name="Huminiecki L."/>
            <person name="Iacono M."/>
            <person name="Ikeo K."/>
            <person name="Iwama A."/>
            <person name="Ishikawa T."/>
            <person name="Jakt M."/>
            <person name="Kanapin A."/>
            <person name="Katoh M."/>
            <person name="Kawasawa Y."/>
            <person name="Kelso J."/>
            <person name="Kitamura H."/>
            <person name="Kitano H."/>
            <person name="Kollias G."/>
            <person name="Krishnan S.P."/>
            <person name="Kruger A."/>
            <person name="Kummerfeld S.K."/>
            <person name="Kurochkin I.V."/>
            <person name="Lareau L.F."/>
            <person name="Lazarevic D."/>
            <person name="Lipovich L."/>
            <person name="Liu J."/>
            <person name="Liuni S."/>
            <person name="McWilliam S."/>
            <person name="Madan Babu M."/>
            <person name="Madera M."/>
            <person name="Marchionni L."/>
            <person name="Matsuda H."/>
            <person name="Matsuzawa S."/>
            <person name="Miki H."/>
            <person name="Mignone F."/>
            <person name="Miyake S."/>
            <person name="Morris K."/>
            <person name="Mottagui-Tabar S."/>
            <person name="Mulder N."/>
            <person name="Nakano N."/>
            <person name="Nakauchi H."/>
            <person name="Ng P."/>
            <person name="Nilsson R."/>
            <person name="Nishiguchi S."/>
            <person name="Nishikawa S."/>
            <person name="Nori F."/>
            <person name="Ohara O."/>
            <person name="Okazaki Y."/>
            <person name="Orlando V."/>
            <person name="Pang K.C."/>
            <person name="Pavan W.J."/>
            <person name="Pavesi G."/>
            <person name="Pesole G."/>
            <person name="Petrovsky N."/>
            <person name="Piazza S."/>
            <person name="Reed J."/>
            <person name="Reid J.F."/>
            <person name="Ring B.Z."/>
            <person name="Ringwald M."/>
            <person name="Rost B."/>
            <person name="Ruan Y."/>
            <person name="Salzberg S.L."/>
            <person name="Sandelin A."/>
            <person name="Schneider C."/>
            <person name="Schoenbach C."/>
            <person name="Sekiguchi K."/>
            <person name="Semple C.A."/>
            <person name="Seno S."/>
            <person name="Sessa L."/>
            <person name="Sheng Y."/>
            <person name="Shibata Y."/>
            <person name="Shimada H."/>
            <person name="Shimada K."/>
            <person name="Silva D."/>
            <person name="Sinclair B."/>
            <person name="Sperling S."/>
            <person name="Stupka E."/>
            <person name="Sugiura K."/>
            <person name="Sultana R."/>
            <person name="Takenaka Y."/>
            <person name="Taki K."/>
            <person name="Tammoja K."/>
            <person name="Tan S.L."/>
            <person name="Tang S."/>
            <person name="Taylor M.S."/>
            <person name="Tegner J."/>
            <person name="Teichmann S.A."/>
            <person name="Ueda H.R."/>
            <person name="van Nimwegen E."/>
            <person name="Verardo R."/>
            <person name="Wei C.L."/>
            <person name="Yagi K."/>
            <person name="Yamanishi H."/>
            <person name="Zabarovsky E."/>
            <person name="Zhu S."/>
            <person name="Zimmer A."/>
            <person name="Hide W."/>
            <person name="Bult C."/>
            <person name="Grimmond S.M."/>
            <person name="Teasdale R.D."/>
            <person name="Liu E.T."/>
            <person name="Brusic V."/>
            <person name="Quackenbush J."/>
            <person name="Wahlestedt C."/>
            <person name="Mattick J.S."/>
            <person name="Hume D.A."/>
            <person name="Kai C."/>
            <person name="Sasaki D."/>
            <person name="Tomaru Y."/>
            <person name="Fukuda S."/>
            <person name="Kanamori-Katayama M."/>
            <person name="Suzuki M."/>
            <person name="Aoki J."/>
            <person name="Arakawa T."/>
            <person name="Iida J."/>
            <person name="Imamura K."/>
            <person name="Itoh M."/>
            <person name="Kato T."/>
            <person name="Kawaji H."/>
            <person name="Kawagashira N."/>
            <person name="Kawashima T."/>
            <person name="Kojima M."/>
            <person name="Kondo S."/>
            <person name="Konno H."/>
            <person name="Nakano K."/>
            <person name="Ninomiya N."/>
            <person name="Nishio T."/>
            <person name="Okada M."/>
            <person name="Plessy C."/>
            <person name="Shibata K."/>
            <person name="Shiraki T."/>
            <person name="Suzuki S."/>
            <person name="Tagami M."/>
            <person name="Waki K."/>
            <person name="Watahiki A."/>
            <person name="Okamura-Oho Y."/>
            <person name="Suzuki H."/>
            <person name="Kawai J."/>
            <person name="Hayashizaki Y."/>
        </authorList>
    </citation>
    <scope>NUCLEOTIDE SEQUENCE [LARGE SCALE MRNA] (ISOFORMS 1 AND 3)</scope>
    <source>
        <strain>C57BL/6J</strain>
        <strain>NOD</strain>
        <tissue>Head</tissue>
        <tissue>Thymus</tissue>
    </source>
</reference>
<reference key="5">
    <citation type="journal article" date="2004" name="Genome Res.">
        <title>The status, quality, and expansion of the NIH full-length cDNA project: the Mammalian Gene Collection (MGC).</title>
        <authorList>
            <consortium name="The MGC Project Team"/>
        </authorList>
    </citation>
    <scope>NUCLEOTIDE SEQUENCE [LARGE SCALE MRNA] (ISOFORM 1)</scope>
    <source>
        <strain>FVB/N</strain>
        <tissue>Colon</tissue>
    </source>
</reference>
<reference key="6">
    <citation type="journal article" date="2005" name="Methods Enzymol.">
        <title>Purification and functional analyses of ALS2 and its homologue.</title>
        <authorList>
            <person name="Hadano S."/>
            <person name="Ikeda J.-E."/>
        </authorList>
    </citation>
    <scope>FUNCTION</scope>
</reference>
<reference key="7">
    <citation type="journal article" date="2007" name="Biochem. Biophys. Res. Commun.">
        <title>ALS2CL, a novel ALS2-interactor, modulates ALS2-mediated endosome dynamics.</title>
        <authorList>
            <person name="Suzuki-Utsunomiya K."/>
            <person name="Hadano S."/>
            <person name="Otomo A."/>
            <person name="Kunita R."/>
            <person name="Mizumura H."/>
            <person name="Osuga H."/>
            <person name="Ikeda J.-E."/>
        </authorList>
    </citation>
    <scope>HOMODIMERIZATION</scope>
    <scope>INTERACTION WITH ALS2</scope>
    <scope>SUBCELLULAR LOCATION</scope>
</reference>